<name>EXBB_HAEDU</name>
<gene>
    <name type="primary">exbB</name>
    <name type="ordered locus">HD_0329</name>
</gene>
<keyword id="KW-0997">Cell inner membrane</keyword>
<keyword id="KW-1003">Cell membrane</keyword>
<keyword id="KW-0472">Membrane</keyword>
<keyword id="KW-0653">Protein transport</keyword>
<keyword id="KW-1185">Reference proteome</keyword>
<keyword id="KW-0812">Transmembrane</keyword>
<keyword id="KW-1133">Transmembrane helix</keyword>
<keyword id="KW-0813">Transport</keyword>
<reference key="1">
    <citation type="journal article" date="1998" name="Infect. Immun.">
        <title>Role of the Haemophilus ducreyi Ton system in internalization of heme from hemoglobin.</title>
        <authorList>
            <person name="Elkins C."/>
            <person name="Totten P.A."/>
            <person name="Olsen B."/>
            <person name="Thomas C.E."/>
        </authorList>
    </citation>
    <scope>NUCLEOTIDE SEQUENCE [GENOMIC DNA]</scope>
    <source>
        <strain>35000HP / ATCC 700724</strain>
    </source>
</reference>
<reference key="2">
    <citation type="submission" date="2003-06" db="EMBL/GenBank/DDBJ databases">
        <title>The complete genome sequence of Haemophilus ducreyi.</title>
        <authorList>
            <person name="Munson R.S. Jr."/>
            <person name="Ray W.C."/>
            <person name="Mahairas G."/>
            <person name="Sabo P."/>
            <person name="Mungur R."/>
            <person name="Johnson L."/>
            <person name="Nguyen D."/>
            <person name="Wang J."/>
            <person name="Forst C."/>
            <person name="Hood L."/>
        </authorList>
    </citation>
    <scope>NUCLEOTIDE SEQUENCE [LARGE SCALE GENOMIC DNA]</scope>
    <source>
        <strain>35000HP / ATCC 700724</strain>
    </source>
</reference>
<organism>
    <name type="scientific">Haemophilus ducreyi (strain 35000HP / ATCC 700724)</name>
    <dbReference type="NCBI Taxonomy" id="233412"/>
    <lineage>
        <taxon>Bacteria</taxon>
        <taxon>Pseudomonadati</taxon>
        <taxon>Pseudomonadota</taxon>
        <taxon>Gammaproteobacteria</taxon>
        <taxon>Pasteurellales</taxon>
        <taxon>Pasteurellaceae</taxon>
        <taxon>Haemophilus</taxon>
    </lineage>
</organism>
<proteinExistence type="inferred from homology"/>
<accession>O51808</accession>
<evidence type="ECO:0000250" key="1"/>
<evidence type="ECO:0000255" key="2"/>
<evidence type="ECO:0000305" key="3"/>
<sequence length="150" mass="16807">MERMLELLQGHVDYIILGILTLMSIILMWKIIERILFYKQLNVTSYETIQELEIDLTRNLTTISTIGANAPYVGLLGTVLGILLTFYHLGHSGGEIDAASIMVHLSLALKATAAGILVAIPAMMFYSGFNRKVEENKLKWQAIEVRKAKQ</sequence>
<dbReference type="EMBL" id="AF001034">
    <property type="protein sequence ID" value="AAC01945.1"/>
    <property type="molecule type" value="Genomic_DNA"/>
</dbReference>
<dbReference type="EMBL" id="AE017143">
    <property type="protein sequence ID" value="AAP95306.1"/>
    <property type="molecule type" value="Genomic_DNA"/>
</dbReference>
<dbReference type="RefSeq" id="WP_010944359.1">
    <property type="nucleotide sequence ID" value="NC_002940.2"/>
</dbReference>
<dbReference type="SMR" id="O51808"/>
<dbReference type="STRING" id="233412.HD_0329"/>
<dbReference type="GeneID" id="60733631"/>
<dbReference type="KEGG" id="hdu:HD_0329"/>
<dbReference type="eggNOG" id="COG0811">
    <property type="taxonomic scope" value="Bacteria"/>
</dbReference>
<dbReference type="HOGENOM" id="CLU_133317_0_0_6"/>
<dbReference type="OrthoDB" id="9805133at2"/>
<dbReference type="Proteomes" id="UP000001022">
    <property type="component" value="Chromosome"/>
</dbReference>
<dbReference type="GO" id="GO:0005886">
    <property type="term" value="C:plasma membrane"/>
    <property type="evidence" value="ECO:0007669"/>
    <property type="project" value="UniProtKB-SubCell"/>
</dbReference>
<dbReference type="GO" id="GO:0017038">
    <property type="term" value="P:protein import"/>
    <property type="evidence" value="ECO:0007669"/>
    <property type="project" value="TreeGrafter"/>
</dbReference>
<dbReference type="GO" id="GO:0055085">
    <property type="term" value="P:transmembrane transport"/>
    <property type="evidence" value="ECO:0007669"/>
    <property type="project" value="InterPro"/>
</dbReference>
<dbReference type="InterPro" id="IPR050790">
    <property type="entry name" value="ExbB/TolQ_transport"/>
</dbReference>
<dbReference type="InterPro" id="IPR002898">
    <property type="entry name" value="MotA_ExbB_proton_chnl"/>
</dbReference>
<dbReference type="InterPro" id="IPR014172">
    <property type="entry name" value="TonB_ExbB_2"/>
</dbReference>
<dbReference type="NCBIfam" id="TIGR02805">
    <property type="entry name" value="exbB2"/>
    <property type="match status" value="1"/>
</dbReference>
<dbReference type="PANTHER" id="PTHR30625:SF15">
    <property type="entry name" value="BIOPOLYMER TRANSPORT PROTEIN EXBB"/>
    <property type="match status" value="1"/>
</dbReference>
<dbReference type="PANTHER" id="PTHR30625">
    <property type="entry name" value="PROTEIN TOLQ"/>
    <property type="match status" value="1"/>
</dbReference>
<dbReference type="Pfam" id="PF01618">
    <property type="entry name" value="MotA_ExbB"/>
    <property type="match status" value="1"/>
</dbReference>
<feature type="chain" id="PRO_0000145801" description="Biopolymer transport protein ExbB">
    <location>
        <begin position="1"/>
        <end position="150"/>
    </location>
</feature>
<feature type="transmembrane region" description="Helical" evidence="2">
    <location>
        <begin position="12"/>
        <end position="32"/>
    </location>
</feature>
<feature type="transmembrane region" description="Helical" evidence="2">
    <location>
        <begin position="66"/>
        <end position="86"/>
    </location>
</feature>
<feature type="transmembrane region" description="Helical" evidence="2">
    <location>
        <begin position="105"/>
        <end position="125"/>
    </location>
</feature>
<comment type="function">
    <text evidence="1">Involved in the TonB-dependent energy-dependent transport of various receptor-bound substrates. Protects ExbD from proteolytic degradation and functionally stabilizes TonB (By similarity).</text>
</comment>
<comment type="subunit">
    <text evidence="1">The accessory proteins ExbB and ExbD seem to form a complex with TonB.</text>
</comment>
<comment type="subcellular location">
    <subcellularLocation>
        <location>Cell inner membrane</location>
        <topology>Multi-pass membrane protein</topology>
    </subcellularLocation>
</comment>
<comment type="similarity">
    <text evidence="3">Belongs to the ExbB/TolQ family.</text>
</comment>
<protein>
    <recommendedName>
        <fullName>Biopolymer transport protein ExbB</fullName>
    </recommendedName>
</protein>